<accession>C0HK86</accession>
<protein>
    <recommendedName>
        <fullName evidence="2">Xenoposin precursor fragment B2</fullName>
        <shortName evidence="2">XPF-B2</shortName>
    </recommendedName>
</protein>
<dbReference type="GO" id="GO:0005576">
    <property type="term" value="C:extracellular region"/>
    <property type="evidence" value="ECO:0007669"/>
    <property type="project" value="UniProtKB-SubCell"/>
</dbReference>
<dbReference type="GO" id="GO:0042742">
    <property type="term" value="P:defense response to bacterium"/>
    <property type="evidence" value="ECO:0007669"/>
    <property type="project" value="UniProtKB-KW"/>
</dbReference>
<name>XPFB2_XENBO</name>
<feature type="peptide" id="PRO_0000438426" description="Xenoposin precursor fragment B2" evidence="1">
    <location>
        <begin position="1"/>
        <end position="24"/>
    </location>
</feature>
<evidence type="ECO:0000269" key="1">
    <source>
    </source>
</evidence>
<evidence type="ECO:0000303" key="2">
    <source>
    </source>
</evidence>
<evidence type="ECO:0000305" key="3"/>
<evidence type="ECO:0000305" key="4">
    <source>
    </source>
</evidence>
<comment type="function">
    <text evidence="1">Has antimicrobial activity against Gram-negative bacterium E.coli ATCC 25922 (MIC=100 uM), Gram-positive bacterium S.auerus ATCC 25923 (MIC=25 uM).</text>
</comment>
<comment type="subcellular location">
    <subcellularLocation>
        <location evidence="1">Secreted</location>
    </subcellularLocation>
</comment>
<comment type="tissue specificity">
    <text evidence="4">Expressed by the skin glands.</text>
</comment>
<comment type="mass spectrometry" mass="2563.6" method="MALDI" evidence="1"/>
<comment type="similarity">
    <text evidence="3">Belongs to the gastrin/cholecystokinin family. Magainin subfamily.</text>
</comment>
<proteinExistence type="evidence at protein level"/>
<keyword id="KW-0044">Antibiotic</keyword>
<keyword id="KW-0929">Antimicrobial</keyword>
<keyword id="KW-0903">Direct protein sequencing</keyword>
<keyword id="KW-0964">Secreted</keyword>
<sequence length="24" mass="2564">GWASKIGTQLGKMAKVGLKEFVQS</sequence>
<organism evidence="2">
    <name type="scientific">Xenopus borealis</name>
    <name type="common">Kenyan clawed frog</name>
    <dbReference type="NCBI Taxonomy" id="8354"/>
    <lineage>
        <taxon>Eukaryota</taxon>
        <taxon>Metazoa</taxon>
        <taxon>Chordata</taxon>
        <taxon>Craniata</taxon>
        <taxon>Vertebrata</taxon>
        <taxon>Euteleostomi</taxon>
        <taxon>Amphibia</taxon>
        <taxon>Batrachia</taxon>
        <taxon>Anura</taxon>
        <taxon>Pipoidea</taxon>
        <taxon>Pipidae</taxon>
        <taxon>Xenopodinae</taxon>
        <taxon>Xenopus</taxon>
        <taxon>Xenopus</taxon>
    </lineage>
</organism>
<reference evidence="3" key="1">
    <citation type="journal article" date="2010" name="Comp. Biochem. Physiol.">
        <title>Antimicrobial peptides with therapeutic potential from skin secretions of the Marsabit clawed frog Xenopus borealis (Pipidae).</title>
        <authorList>
            <person name="Mechkarska M."/>
            <person name="Ahmed E."/>
            <person name="Coquet L."/>
            <person name="Leprince J."/>
            <person name="Jouenne T."/>
            <person name="Vaudry H."/>
            <person name="King J.D."/>
            <person name="Conlon J.M."/>
        </authorList>
    </citation>
    <scope>PROTEIN SEQUENCE</scope>
    <scope>FUNCTION</scope>
    <scope>SUBCELLULAR LOCATION</scope>
    <scope>MASS SPECTROMETRY</scope>
    <source>
        <tissue evidence="2">Skin secretion</tissue>
    </source>
</reference>